<name>GATA_MYCBT</name>
<protein>
    <recommendedName>
        <fullName evidence="1">Glutamyl-tRNA(Gln) amidotransferase subunit A</fullName>
        <shortName evidence="1">Glu-ADT subunit A</shortName>
        <ecNumber evidence="1">6.3.5.7</ecNumber>
    </recommendedName>
</protein>
<feature type="chain" id="PRO_1000122485" description="Glutamyl-tRNA(Gln) amidotransferase subunit A">
    <location>
        <begin position="1"/>
        <end position="494"/>
    </location>
</feature>
<feature type="active site" description="Charge relay system" evidence="1">
    <location>
        <position position="81"/>
    </location>
</feature>
<feature type="active site" description="Charge relay system" evidence="1">
    <location>
        <position position="156"/>
    </location>
</feature>
<feature type="active site" description="Acyl-ester intermediate" evidence="1">
    <location>
        <position position="180"/>
    </location>
</feature>
<evidence type="ECO:0000255" key="1">
    <source>
        <dbReference type="HAMAP-Rule" id="MF_00120"/>
    </source>
</evidence>
<sequence length="494" mass="51436">MTDIIRSDAATLAAKIAIKEVSSTEITRACLDQIEATDETYHAFLHVAADEALAAAAAVDKQVAAGEPLPSALAGVPLALKDVFTTSDMPTTCGSKILEGWRSPYDATLTARLRAAGIPILGKTNMDEFAMGSSTENSAYGPTRNPWNLDRVPGGSGGGSAAALAAFQAPLAIGSDTGGSIRQPAALTATVGVKPTYGTVSRYGLVACASSLDQGGPCARTVLDTALLHQVIAGHDPRDSTSVDAEVPDVVGAARAGAVGDLRGVRVGVVRQLHGGEGYQPGVLASFEAAVEQLTALGAEVSEVDCPHFDHALAAYYLILPSEVSSNLARFDAMRYGLRVGDDGTRSAEEVMAMTRAAGFGPEVKRRIMIGTYALSAGYYDAYYNQAQKVRTLIARDLDAAYRSVDVLVSPTTPTTAFRLGEKVDDPLAMYLFDLCTLPLNLAGHCGMSVPSGLSPDDGLPVGLQIMAPALADDRLYRVGAAYEAARGPLLSAI</sequence>
<gene>
    <name evidence="1" type="primary">gatA</name>
    <name type="ordered locus">JTY_3028</name>
</gene>
<accession>C1AGC7</accession>
<keyword id="KW-0067">ATP-binding</keyword>
<keyword id="KW-0436">Ligase</keyword>
<keyword id="KW-0547">Nucleotide-binding</keyword>
<keyword id="KW-0648">Protein biosynthesis</keyword>
<organism>
    <name type="scientific">Mycobacterium bovis (strain BCG / Tokyo 172 / ATCC 35737 / TMC 1019)</name>
    <dbReference type="NCBI Taxonomy" id="561275"/>
    <lineage>
        <taxon>Bacteria</taxon>
        <taxon>Bacillati</taxon>
        <taxon>Actinomycetota</taxon>
        <taxon>Actinomycetes</taxon>
        <taxon>Mycobacteriales</taxon>
        <taxon>Mycobacteriaceae</taxon>
        <taxon>Mycobacterium</taxon>
        <taxon>Mycobacterium tuberculosis complex</taxon>
    </lineage>
</organism>
<comment type="function">
    <text evidence="1">Allows the formation of correctly charged Gln-tRNA(Gln) through the transamidation of misacylated Glu-tRNA(Gln) in organisms which lack glutaminyl-tRNA synthetase. The reaction takes place in the presence of glutamine and ATP through an activated gamma-phospho-Glu-tRNA(Gln).</text>
</comment>
<comment type="catalytic activity">
    <reaction evidence="1">
        <text>L-glutamyl-tRNA(Gln) + L-glutamine + ATP + H2O = L-glutaminyl-tRNA(Gln) + L-glutamate + ADP + phosphate + H(+)</text>
        <dbReference type="Rhea" id="RHEA:17521"/>
        <dbReference type="Rhea" id="RHEA-COMP:9681"/>
        <dbReference type="Rhea" id="RHEA-COMP:9684"/>
        <dbReference type="ChEBI" id="CHEBI:15377"/>
        <dbReference type="ChEBI" id="CHEBI:15378"/>
        <dbReference type="ChEBI" id="CHEBI:29985"/>
        <dbReference type="ChEBI" id="CHEBI:30616"/>
        <dbReference type="ChEBI" id="CHEBI:43474"/>
        <dbReference type="ChEBI" id="CHEBI:58359"/>
        <dbReference type="ChEBI" id="CHEBI:78520"/>
        <dbReference type="ChEBI" id="CHEBI:78521"/>
        <dbReference type="ChEBI" id="CHEBI:456216"/>
        <dbReference type="EC" id="6.3.5.7"/>
    </reaction>
</comment>
<comment type="subunit">
    <text evidence="1">Heterotrimer of A, B and C subunits.</text>
</comment>
<comment type="similarity">
    <text evidence="1">Belongs to the amidase family. GatA subfamily.</text>
</comment>
<dbReference type="EC" id="6.3.5.7" evidence="1"/>
<dbReference type="EMBL" id="AP010918">
    <property type="protein sequence ID" value="BAH27306.1"/>
    <property type="molecule type" value="Genomic_DNA"/>
</dbReference>
<dbReference type="RefSeq" id="WP_010950812.1">
    <property type="nucleotide sequence ID" value="NZ_CP014566.1"/>
</dbReference>
<dbReference type="SMR" id="C1AGC7"/>
<dbReference type="KEGG" id="mbt:JTY_3028"/>
<dbReference type="HOGENOM" id="CLU_009600_0_3_11"/>
<dbReference type="GO" id="GO:0030956">
    <property type="term" value="C:glutamyl-tRNA(Gln) amidotransferase complex"/>
    <property type="evidence" value="ECO:0007669"/>
    <property type="project" value="InterPro"/>
</dbReference>
<dbReference type="GO" id="GO:0005524">
    <property type="term" value="F:ATP binding"/>
    <property type="evidence" value="ECO:0007669"/>
    <property type="project" value="UniProtKB-KW"/>
</dbReference>
<dbReference type="GO" id="GO:0050567">
    <property type="term" value="F:glutaminyl-tRNA synthase (glutamine-hydrolyzing) activity"/>
    <property type="evidence" value="ECO:0007669"/>
    <property type="project" value="UniProtKB-UniRule"/>
</dbReference>
<dbReference type="GO" id="GO:0006412">
    <property type="term" value="P:translation"/>
    <property type="evidence" value="ECO:0007669"/>
    <property type="project" value="UniProtKB-UniRule"/>
</dbReference>
<dbReference type="Gene3D" id="3.90.1300.10">
    <property type="entry name" value="Amidase signature (AS) domain"/>
    <property type="match status" value="1"/>
</dbReference>
<dbReference type="HAMAP" id="MF_00120">
    <property type="entry name" value="GatA"/>
    <property type="match status" value="1"/>
</dbReference>
<dbReference type="InterPro" id="IPR000120">
    <property type="entry name" value="Amidase"/>
</dbReference>
<dbReference type="InterPro" id="IPR020556">
    <property type="entry name" value="Amidase_CS"/>
</dbReference>
<dbReference type="InterPro" id="IPR023631">
    <property type="entry name" value="Amidase_dom"/>
</dbReference>
<dbReference type="InterPro" id="IPR036928">
    <property type="entry name" value="AS_sf"/>
</dbReference>
<dbReference type="InterPro" id="IPR004412">
    <property type="entry name" value="GatA"/>
</dbReference>
<dbReference type="NCBIfam" id="TIGR00132">
    <property type="entry name" value="gatA"/>
    <property type="match status" value="1"/>
</dbReference>
<dbReference type="PANTHER" id="PTHR11895:SF151">
    <property type="entry name" value="GLUTAMYL-TRNA(GLN) AMIDOTRANSFERASE SUBUNIT A"/>
    <property type="match status" value="1"/>
</dbReference>
<dbReference type="PANTHER" id="PTHR11895">
    <property type="entry name" value="TRANSAMIDASE"/>
    <property type="match status" value="1"/>
</dbReference>
<dbReference type="Pfam" id="PF01425">
    <property type="entry name" value="Amidase"/>
    <property type="match status" value="1"/>
</dbReference>
<dbReference type="SUPFAM" id="SSF75304">
    <property type="entry name" value="Amidase signature (AS) enzymes"/>
    <property type="match status" value="1"/>
</dbReference>
<dbReference type="PROSITE" id="PS00571">
    <property type="entry name" value="AMIDASES"/>
    <property type="match status" value="1"/>
</dbReference>
<reference key="1">
    <citation type="journal article" date="2009" name="Vaccine">
        <title>Whole genome sequence analysis of Mycobacterium bovis bacillus Calmette-Guerin (BCG) Tokyo 172: a comparative study of BCG vaccine substrains.</title>
        <authorList>
            <person name="Seki M."/>
            <person name="Honda I."/>
            <person name="Fujita I."/>
            <person name="Yano I."/>
            <person name="Yamamoto S."/>
            <person name="Koyama A."/>
        </authorList>
    </citation>
    <scope>NUCLEOTIDE SEQUENCE [LARGE SCALE GENOMIC DNA]</scope>
    <source>
        <strain>BCG / Tokyo 172 / ATCC 35737 / TMC 1019</strain>
    </source>
</reference>
<proteinExistence type="inferred from homology"/>